<keyword id="KW-1003">Cell membrane</keyword>
<keyword id="KW-0255">Endonuclease</keyword>
<keyword id="KW-0378">Hydrolase</keyword>
<keyword id="KW-0472">Membrane</keyword>
<keyword id="KW-0540">Nuclease</keyword>
<keyword id="KW-1185">Reference proteome</keyword>
<keyword id="KW-0694">RNA-binding</keyword>
<keyword id="KW-0812">Transmembrane</keyword>
<keyword id="KW-1133">Transmembrane helix</keyword>
<protein>
    <recommendedName>
        <fullName evidence="1">Ribonuclease Y</fullName>
        <shortName evidence="1">RNase Y</shortName>
        <ecNumber evidence="1">3.1.-.-</ecNumber>
    </recommendedName>
</protein>
<evidence type="ECO:0000255" key="1">
    <source>
        <dbReference type="HAMAP-Rule" id="MF_00335"/>
    </source>
</evidence>
<evidence type="ECO:0000255" key="2">
    <source>
        <dbReference type="PROSITE-ProRule" id="PRU01175"/>
    </source>
</evidence>
<organism>
    <name type="scientific">Mycoplasma mycoides subsp. mycoides SC (strain CCUG 32753 / NCTC 10114 / PG1)</name>
    <dbReference type="NCBI Taxonomy" id="272632"/>
    <lineage>
        <taxon>Bacteria</taxon>
        <taxon>Bacillati</taxon>
        <taxon>Mycoplasmatota</taxon>
        <taxon>Mollicutes</taxon>
        <taxon>Mycoplasmataceae</taxon>
        <taxon>Mycoplasma</taxon>
    </lineage>
</organism>
<reference key="1">
    <citation type="journal article" date="2004" name="Genome Res.">
        <title>The genome sequence of Mycoplasma mycoides subsp. mycoides SC type strain PG1T, the causative agent of contagious bovine pleuropneumonia (CBPP).</title>
        <authorList>
            <person name="Westberg J."/>
            <person name="Persson A."/>
            <person name="Holmberg A."/>
            <person name="Goesmann A."/>
            <person name="Lundeberg J."/>
            <person name="Johansson K.-E."/>
            <person name="Pettersson B."/>
            <person name="Uhlen M."/>
        </authorList>
    </citation>
    <scope>NUCLEOTIDE SEQUENCE [LARGE SCALE GENOMIC DNA]</scope>
    <source>
        <strain>CCUG 32753 / NCTC 10114 / PG1</strain>
    </source>
</reference>
<name>RNY_MYCMS</name>
<proteinExistence type="inferred from homology"/>
<sequence length="509" mass="57480">MNDDIIILLSVFCGIFFICFIICSSIALYLWKSKSRKRLVEQYTKEAKQAKKQILANGYKEISEAKMLFLKRSELEKNELDRVKEQLELRSNDLKRNQEIVESKSQRLDASLLDLEKRKFLLDKKEEYLIKILEDASGLTKSQAKELLIKQVKNKSEKELISILKNAELQAHSSSKMIANNIIISAMERIKVELTSQRTTNIVKLPSDDLKGRIIGKDGRNMKAFEQIGGVDIVVDETPNTVVVSSFNPIRREIATRTLEQLIIDGRIQPIKIENELKKQEQELEYIIQETGLSTIKELNINDIDIELVKLIGKLKFRTSYGQNVLAHSIEVAKLSGAIASELGLDVEKAIRAGLLHDIGKAIDFEKQGSHVVLGAEIAKKYNEDPIIINCIESHHEDKEKESEIAAIVAIADSISASRPGARYNAIDEFILRMTEIEKIGNSIPGVAKTYALQSGRQIRLIVNPLVASDLDLAMILEKMKEEIKNKVIIPGEITITVIRERKETDVLK</sequence>
<feature type="chain" id="PRO_0000344910" description="Ribonuclease Y">
    <location>
        <begin position="1"/>
        <end position="509"/>
    </location>
</feature>
<feature type="transmembrane region" description="Helical" evidence="1">
    <location>
        <begin position="5"/>
        <end position="25"/>
    </location>
</feature>
<feature type="domain" description="KH" evidence="1">
    <location>
        <begin position="199"/>
        <end position="259"/>
    </location>
</feature>
<feature type="domain" description="HD" evidence="2">
    <location>
        <begin position="325"/>
        <end position="418"/>
    </location>
</feature>
<accession>Q6MTI6</accession>
<dbReference type="EC" id="3.1.-.-" evidence="1"/>
<dbReference type="EMBL" id="BX293980">
    <property type="protein sequence ID" value="CAE77050.1"/>
    <property type="molecule type" value="Genomic_DNA"/>
</dbReference>
<dbReference type="RefSeq" id="NP_975408.1">
    <property type="nucleotide sequence ID" value="NC_005364.2"/>
</dbReference>
<dbReference type="RefSeq" id="WP_011166606.1">
    <property type="nucleotide sequence ID" value="NC_005364.2"/>
</dbReference>
<dbReference type="SMR" id="Q6MTI6"/>
<dbReference type="STRING" id="272632.MSC_0422"/>
<dbReference type="KEGG" id="mmy:MSC_0422"/>
<dbReference type="PATRIC" id="fig|272632.4.peg.460"/>
<dbReference type="eggNOG" id="COG1418">
    <property type="taxonomic scope" value="Bacteria"/>
</dbReference>
<dbReference type="HOGENOM" id="CLU_028328_1_0_14"/>
<dbReference type="Proteomes" id="UP000001016">
    <property type="component" value="Chromosome"/>
</dbReference>
<dbReference type="GO" id="GO:0005886">
    <property type="term" value="C:plasma membrane"/>
    <property type="evidence" value="ECO:0007669"/>
    <property type="project" value="UniProtKB-SubCell"/>
</dbReference>
<dbReference type="GO" id="GO:0003723">
    <property type="term" value="F:RNA binding"/>
    <property type="evidence" value="ECO:0007669"/>
    <property type="project" value="UniProtKB-UniRule"/>
</dbReference>
<dbReference type="GO" id="GO:0004521">
    <property type="term" value="F:RNA endonuclease activity"/>
    <property type="evidence" value="ECO:0007669"/>
    <property type="project" value="UniProtKB-UniRule"/>
</dbReference>
<dbReference type="GO" id="GO:0006402">
    <property type="term" value="P:mRNA catabolic process"/>
    <property type="evidence" value="ECO:0007669"/>
    <property type="project" value="UniProtKB-UniRule"/>
</dbReference>
<dbReference type="CDD" id="cd00077">
    <property type="entry name" value="HDc"/>
    <property type="match status" value="1"/>
</dbReference>
<dbReference type="CDD" id="cd22431">
    <property type="entry name" value="KH-I_RNaseY"/>
    <property type="match status" value="1"/>
</dbReference>
<dbReference type="Gene3D" id="1.10.3210.10">
    <property type="entry name" value="Hypothetical protein af1432"/>
    <property type="match status" value="1"/>
</dbReference>
<dbReference type="Gene3D" id="3.30.1370.10">
    <property type="entry name" value="K Homology domain, type 1"/>
    <property type="match status" value="1"/>
</dbReference>
<dbReference type="HAMAP" id="MF_00335">
    <property type="entry name" value="RNase_Y"/>
    <property type="match status" value="1"/>
</dbReference>
<dbReference type="InterPro" id="IPR051094">
    <property type="entry name" value="Diverse_Catalytic_Enzymes"/>
</dbReference>
<dbReference type="InterPro" id="IPR003607">
    <property type="entry name" value="HD/PDEase_dom"/>
</dbReference>
<dbReference type="InterPro" id="IPR006674">
    <property type="entry name" value="HD_domain"/>
</dbReference>
<dbReference type="InterPro" id="IPR006675">
    <property type="entry name" value="HDIG_dom"/>
</dbReference>
<dbReference type="InterPro" id="IPR004087">
    <property type="entry name" value="KH_dom"/>
</dbReference>
<dbReference type="InterPro" id="IPR004088">
    <property type="entry name" value="KH_dom_type_1"/>
</dbReference>
<dbReference type="InterPro" id="IPR036612">
    <property type="entry name" value="KH_dom_type_1_sf"/>
</dbReference>
<dbReference type="InterPro" id="IPR017705">
    <property type="entry name" value="Ribonuclease_Y"/>
</dbReference>
<dbReference type="InterPro" id="IPR022711">
    <property type="entry name" value="RNase_Y_N"/>
</dbReference>
<dbReference type="NCBIfam" id="TIGR00277">
    <property type="entry name" value="HDIG"/>
    <property type="match status" value="1"/>
</dbReference>
<dbReference type="NCBIfam" id="TIGR03319">
    <property type="entry name" value="RNase_Y"/>
    <property type="match status" value="1"/>
</dbReference>
<dbReference type="PANTHER" id="PTHR35795:SF1">
    <property type="entry name" value="BIS(5'-NUCLEOSYL)-TETRAPHOSPHATASE, SYMMETRICAL"/>
    <property type="match status" value="1"/>
</dbReference>
<dbReference type="PANTHER" id="PTHR35795">
    <property type="entry name" value="SLR1885 PROTEIN"/>
    <property type="match status" value="1"/>
</dbReference>
<dbReference type="Pfam" id="PF01966">
    <property type="entry name" value="HD"/>
    <property type="match status" value="1"/>
</dbReference>
<dbReference type="Pfam" id="PF00013">
    <property type="entry name" value="KH_1"/>
    <property type="match status" value="1"/>
</dbReference>
<dbReference type="Pfam" id="PF12072">
    <property type="entry name" value="RNase_Y_N"/>
    <property type="match status" value="1"/>
</dbReference>
<dbReference type="SMART" id="SM00471">
    <property type="entry name" value="HDc"/>
    <property type="match status" value="1"/>
</dbReference>
<dbReference type="SMART" id="SM00322">
    <property type="entry name" value="KH"/>
    <property type="match status" value="1"/>
</dbReference>
<dbReference type="SUPFAM" id="SSF54791">
    <property type="entry name" value="Eukaryotic type KH-domain (KH-domain type I)"/>
    <property type="match status" value="1"/>
</dbReference>
<dbReference type="SUPFAM" id="SSF109604">
    <property type="entry name" value="HD-domain/PDEase-like"/>
    <property type="match status" value="1"/>
</dbReference>
<dbReference type="PROSITE" id="PS51831">
    <property type="entry name" value="HD"/>
    <property type="match status" value="1"/>
</dbReference>
<gene>
    <name evidence="1" type="primary">rny</name>
    <name type="ordered locus">MSC_0422</name>
</gene>
<comment type="function">
    <text evidence="1">Endoribonuclease that initiates mRNA decay.</text>
</comment>
<comment type="subcellular location">
    <subcellularLocation>
        <location evidence="1">Cell membrane</location>
        <topology evidence="1">Single-pass membrane protein</topology>
    </subcellularLocation>
</comment>
<comment type="similarity">
    <text evidence="1">Belongs to the RNase Y family.</text>
</comment>